<dbReference type="EC" id="2.4.1.198"/>
<dbReference type="EMBL" id="CU329671">
    <property type="protein sequence ID" value="CAB09127.1"/>
    <property type="molecule type" value="Genomic_DNA"/>
</dbReference>
<dbReference type="PIR" id="T40367">
    <property type="entry name" value="T40367"/>
</dbReference>
<dbReference type="RefSeq" id="NP_595519.1">
    <property type="nucleotide sequence ID" value="NM_001021428.1"/>
</dbReference>
<dbReference type="SMR" id="P87172"/>
<dbReference type="BioGRID" id="277502">
    <property type="interactions" value="2"/>
</dbReference>
<dbReference type="ComplexPortal" id="CPX-10121">
    <property type="entry name" value="Glycosylphosphatidylinositol-N-acetylglucosaminyltransferase complex"/>
</dbReference>
<dbReference type="FunCoup" id="P87172">
    <property type="interactions" value="266"/>
</dbReference>
<dbReference type="STRING" id="284812.P87172"/>
<dbReference type="CAZy" id="GT4">
    <property type="family name" value="Glycosyltransferase Family 4"/>
</dbReference>
<dbReference type="iPTMnet" id="P87172"/>
<dbReference type="PaxDb" id="4896-SPBC3D6.07.1"/>
<dbReference type="EnsemblFungi" id="SPBC3D6.07.1">
    <property type="protein sequence ID" value="SPBC3D6.07.1:pep"/>
    <property type="gene ID" value="SPBC3D6.07"/>
</dbReference>
<dbReference type="GeneID" id="2540986"/>
<dbReference type="KEGG" id="spo:2540986"/>
<dbReference type="PomBase" id="SPBC3D6.07">
    <property type="gene designation" value="gpi3"/>
</dbReference>
<dbReference type="VEuPathDB" id="FungiDB:SPBC3D6.07"/>
<dbReference type="eggNOG" id="KOG1111">
    <property type="taxonomic scope" value="Eukaryota"/>
</dbReference>
<dbReference type="HOGENOM" id="CLU_009583_19_0_1"/>
<dbReference type="InParanoid" id="P87172"/>
<dbReference type="OMA" id="SHFWMSG"/>
<dbReference type="PhylomeDB" id="P87172"/>
<dbReference type="UniPathway" id="UPA00196"/>
<dbReference type="PRO" id="PR:P87172"/>
<dbReference type="Proteomes" id="UP000002485">
    <property type="component" value="Chromosome II"/>
</dbReference>
<dbReference type="GO" id="GO:0000506">
    <property type="term" value="C:glycosylphosphatidylinositol-N-acetylglucosaminyltransferase (GPI-GnT) complex"/>
    <property type="evidence" value="ECO:0000318"/>
    <property type="project" value="GO_Central"/>
</dbReference>
<dbReference type="GO" id="GO:0017176">
    <property type="term" value="F:phosphatidylinositol N-acetylglucosaminyltransferase activity"/>
    <property type="evidence" value="ECO:0000318"/>
    <property type="project" value="GO_Central"/>
</dbReference>
<dbReference type="GO" id="GO:0006506">
    <property type="term" value="P:GPI anchor biosynthetic process"/>
    <property type="evidence" value="ECO:0000318"/>
    <property type="project" value="GO_Central"/>
</dbReference>
<dbReference type="CDD" id="cd03796">
    <property type="entry name" value="GT4_PIG-A-like"/>
    <property type="match status" value="1"/>
</dbReference>
<dbReference type="FunFam" id="3.40.50.2000:FF:000053">
    <property type="entry name" value="Phosphatidylinositol N-acetylglucosaminyltransferase GPI3 subunit"/>
    <property type="match status" value="1"/>
</dbReference>
<dbReference type="FunFam" id="3.40.50.2000:FF:000026">
    <property type="entry name" value="Phosphatidylinositol N-acetylglucosaminyltransferase subunit A"/>
    <property type="match status" value="1"/>
</dbReference>
<dbReference type="Gene3D" id="3.40.50.2000">
    <property type="entry name" value="Glycogen Phosphorylase B"/>
    <property type="match status" value="2"/>
</dbReference>
<dbReference type="InterPro" id="IPR001296">
    <property type="entry name" value="Glyco_trans_1"/>
</dbReference>
<dbReference type="InterPro" id="IPR039507">
    <property type="entry name" value="PIG-A/GPI3"/>
</dbReference>
<dbReference type="InterPro" id="IPR013234">
    <property type="entry name" value="PIGA_GPI_anchor_biosynthesis"/>
</dbReference>
<dbReference type="PANTHER" id="PTHR45871">
    <property type="entry name" value="N-ACETYLGLUCOSAMINYL-PHOSPHATIDYLINOSITOL BIOSYNTHETIC PROTEIN"/>
    <property type="match status" value="1"/>
</dbReference>
<dbReference type="PANTHER" id="PTHR45871:SF1">
    <property type="entry name" value="PHOSPHATIDYLINOSITOL N-ACETYLGLUCOSAMINYLTRANSFERASE SUBUNIT A"/>
    <property type="match status" value="1"/>
</dbReference>
<dbReference type="Pfam" id="PF00534">
    <property type="entry name" value="Glycos_transf_1"/>
    <property type="match status" value="1"/>
</dbReference>
<dbReference type="Pfam" id="PF08288">
    <property type="entry name" value="PIGA"/>
    <property type="match status" value="1"/>
</dbReference>
<dbReference type="SUPFAM" id="SSF53756">
    <property type="entry name" value="UDP-Glycosyltransferase/glycogen phosphorylase"/>
    <property type="match status" value="1"/>
</dbReference>
<feature type="chain" id="PRO_0000339138" description="Phosphatidylinositol N-acetylglucosaminyltransferase gpi3 subunit">
    <location>
        <begin position="1"/>
        <end position="456"/>
    </location>
</feature>
<keyword id="KW-0328">Glycosyltransferase</keyword>
<keyword id="KW-0337">GPI-anchor biosynthesis</keyword>
<keyword id="KW-1185">Reference proteome</keyword>
<keyword id="KW-0808">Transferase</keyword>
<organism>
    <name type="scientific">Schizosaccharomyces pombe (strain 972 / ATCC 24843)</name>
    <name type="common">Fission yeast</name>
    <dbReference type="NCBI Taxonomy" id="284812"/>
    <lineage>
        <taxon>Eukaryota</taxon>
        <taxon>Fungi</taxon>
        <taxon>Dikarya</taxon>
        <taxon>Ascomycota</taxon>
        <taxon>Taphrinomycotina</taxon>
        <taxon>Schizosaccharomycetes</taxon>
        <taxon>Schizosaccharomycetales</taxon>
        <taxon>Schizosaccharomycetaceae</taxon>
        <taxon>Schizosaccharomyces</taxon>
    </lineage>
</organism>
<name>GPI3_SCHPO</name>
<reference key="1">
    <citation type="journal article" date="2002" name="Nature">
        <title>The genome sequence of Schizosaccharomyces pombe.</title>
        <authorList>
            <person name="Wood V."/>
            <person name="Gwilliam R."/>
            <person name="Rajandream M.A."/>
            <person name="Lyne M.H."/>
            <person name="Lyne R."/>
            <person name="Stewart A."/>
            <person name="Sgouros J.G."/>
            <person name="Peat N."/>
            <person name="Hayles J."/>
            <person name="Baker S.G."/>
            <person name="Basham D."/>
            <person name="Bowman S."/>
            <person name="Brooks K."/>
            <person name="Brown D."/>
            <person name="Brown S."/>
            <person name="Chillingworth T."/>
            <person name="Churcher C.M."/>
            <person name="Collins M."/>
            <person name="Connor R."/>
            <person name="Cronin A."/>
            <person name="Davis P."/>
            <person name="Feltwell T."/>
            <person name="Fraser A."/>
            <person name="Gentles S."/>
            <person name="Goble A."/>
            <person name="Hamlin N."/>
            <person name="Harris D.E."/>
            <person name="Hidalgo J."/>
            <person name="Hodgson G."/>
            <person name="Holroyd S."/>
            <person name="Hornsby T."/>
            <person name="Howarth S."/>
            <person name="Huckle E.J."/>
            <person name="Hunt S."/>
            <person name="Jagels K."/>
            <person name="James K.D."/>
            <person name="Jones L."/>
            <person name="Jones M."/>
            <person name="Leather S."/>
            <person name="McDonald S."/>
            <person name="McLean J."/>
            <person name="Mooney P."/>
            <person name="Moule S."/>
            <person name="Mungall K.L."/>
            <person name="Murphy L.D."/>
            <person name="Niblett D."/>
            <person name="Odell C."/>
            <person name="Oliver K."/>
            <person name="O'Neil S."/>
            <person name="Pearson D."/>
            <person name="Quail M.A."/>
            <person name="Rabbinowitsch E."/>
            <person name="Rutherford K.M."/>
            <person name="Rutter S."/>
            <person name="Saunders D."/>
            <person name="Seeger K."/>
            <person name="Sharp S."/>
            <person name="Skelton J."/>
            <person name="Simmonds M.N."/>
            <person name="Squares R."/>
            <person name="Squares S."/>
            <person name="Stevens K."/>
            <person name="Taylor K."/>
            <person name="Taylor R.G."/>
            <person name="Tivey A."/>
            <person name="Walsh S.V."/>
            <person name="Warren T."/>
            <person name="Whitehead S."/>
            <person name="Woodward J.R."/>
            <person name="Volckaert G."/>
            <person name="Aert R."/>
            <person name="Robben J."/>
            <person name="Grymonprez B."/>
            <person name="Weltjens I."/>
            <person name="Vanstreels E."/>
            <person name="Rieger M."/>
            <person name="Schaefer M."/>
            <person name="Mueller-Auer S."/>
            <person name="Gabel C."/>
            <person name="Fuchs M."/>
            <person name="Duesterhoeft A."/>
            <person name="Fritzc C."/>
            <person name="Holzer E."/>
            <person name="Moestl D."/>
            <person name="Hilbert H."/>
            <person name="Borzym K."/>
            <person name="Langer I."/>
            <person name="Beck A."/>
            <person name="Lehrach H."/>
            <person name="Reinhardt R."/>
            <person name="Pohl T.M."/>
            <person name="Eger P."/>
            <person name="Zimmermann W."/>
            <person name="Wedler H."/>
            <person name="Wambutt R."/>
            <person name="Purnelle B."/>
            <person name="Goffeau A."/>
            <person name="Cadieu E."/>
            <person name="Dreano S."/>
            <person name="Gloux S."/>
            <person name="Lelaure V."/>
            <person name="Mottier S."/>
            <person name="Galibert F."/>
            <person name="Aves S.J."/>
            <person name="Xiang Z."/>
            <person name="Hunt C."/>
            <person name="Moore K."/>
            <person name="Hurst S.M."/>
            <person name="Lucas M."/>
            <person name="Rochet M."/>
            <person name="Gaillardin C."/>
            <person name="Tallada V.A."/>
            <person name="Garzon A."/>
            <person name="Thode G."/>
            <person name="Daga R.R."/>
            <person name="Cruzado L."/>
            <person name="Jimenez J."/>
            <person name="Sanchez M."/>
            <person name="del Rey F."/>
            <person name="Benito J."/>
            <person name="Dominguez A."/>
            <person name="Revuelta J.L."/>
            <person name="Moreno S."/>
            <person name="Armstrong J."/>
            <person name="Forsburg S.L."/>
            <person name="Cerutti L."/>
            <person name="Lowe T."/>
            <person name="McCombie W.R."/>
            <person name="Paulsen I."/>
            <person name="Potashkin J."/>
            <person name="Shpakovski G.V."/>
            <person name="Ussery D."/>
            <person name="Barrell B.G."/>
            <person name="Nurse P."/>
        </authorList>
    </citation>
    <scope>NUCLEOTIDE SEQUENCE [LARGE SCALE GENOMIC DNA]</scope>
    <source>
        <strain>972 / ATCC 24843</strain>
    </source>
</reference>
<gene>
    <name type="primary">gpi3</name>
    <name type="ORF">SPBC3D6.07</name>
</gene>
<accession>P87172</accession>
<comment type="function">
    <text evidence="1">Catalytic subunit in the complex catalyzing the transfer of N-acetylglucosamine from UDP-N-acetylglucosamine to phosphatidylinositol, the first step of GPI biosynthesis.</text>
</comment>
<comment type="catalytic activity">
    <reaction>
        <text>a 1,2-diacyl-sn-glycero-3-phospho-(1D-myo-inositol) + UDP-N-acetyl-alpha-D-glucosamine = a 6-(N-acetyl-alpha-D-glucosaminyl)-1-(1,2-diacyl-sn-glycero-3-phospho)-1D-myo-inositol + UDP + H(+)</text>
        <dbReference type="Rhea" id="RHEA:14789"/>
        <dbReference type="ChEBI" id="CHEBI:15378"/>
        <dbReference type="ChEBI" id="CHEBI:57265"/>
        <dbReference type="ChEBI" id="CHEBI:57705"/>
        <dbReference type="ChEBI" id="CHEBI:57880"/>
        <dbReference type="ChEBI" id="CHEBI:58223"/>
        <dbReference type="EC" id="2.4.1.198"/>
    </reaction>
</comment>
<comment type="pathway">
    <text>Glycolipid biosynthesis; glycosylphosphatidylinositol-anchor biosynthesis.</text>
</comment>
<comment type="subunit">
    <text evidence="1">Component of a Phosphatidylinositol N-acetylglucosaminyltransferase complex.</text>
</comment>
<comment type="similarity">
    <text evidence="2">Belongs to the glycosyltransferase group 1 family. Glycosyltransferase 4 subfamily.</text>
</comment>
<proteinExistence type="inferred from homology"/>
<sequence>MVSDFFFPQPGGIESHIFQLSQRLIDLGHKVIVITHAYKDRVGVRYLTNGLTVYYVPLHTVYRETTFPSFFSFFPIFRNIVIRENIEIVHGHGSLSFLCHDAILHARTMGLKTCFTDHSLFGFADAGSIVTNKLLKFTMSDVNHVICVSHTCRENTVLRAVLNPKRVSVIPNALVAENFQPDPSKASKDFLTIVVISRLYYNKGIDLLIAVIPRICAQHPKVRFVIAGDGPKSIDLEQMREKYMLQDRVEMLGSVRHDQVRDVMVRGHIYLHPSLTEAFGTVLVEAASCGLYVISTKVGGVPEVLPSHMTRFARPEEDDLADTLSSVITDYLDHKIKTETFHEEVKQMYSWIDVAERTEKVYDSICSENNLRLIDRLKLYYGCGQWAGKLFCLLIAIDYLVMVLLEWIWPASDIDPAVDRVSSTFKISKQNFDESLVLTDPKKKTKIKTACLKDAQ</sequence>
<evidence type="ECO:0000250" key="1"/>
<evidence type="ECO:0000305" key="2"/>
<protein>
    <recommendedName>
        <fullName>Phosphatidylinositol N-acetylglucosaminyltransferase gpi3 subunit</fullName>
        <ecNumber>2.4.1.198</ecNumber>
    </recommendedName>
    <alternativeName>
        <fullName>GlcNAc-PI synthesis protein</fullName>
    </alternativeName>
</protein>